<evidence type="ECO:0000256" key="1">
    <source>
        <dbReference type="SAM" id="MobiDB-lite"/>
    </source>
</evidence>
<sequence length="79" mass="8201">MKLAKTAVLDPATYTSFSPGLSTCSSSQPPGDRRKGLLGCVGSGHCPLPTPAQFPKVQRPPTLLGGKNTSTQTTLHPVI</sequence>
<reference key="1">
    <citation type="journal article" date="2004" name="Nature">
        <title>DNA sequence and analysis of human chromosome 9.</title>
        <authorList>
            <person name="Humphray S.J."/>
            <person name="Oliver K."/>
            <person name="Hunt A.R."/>
            <person name="Plumb R.W."/>
            <person name="Loveland J.E."/>
            <person name="Howe K.L."/>
            <person name="Andrews T.D."/>
            <person name="Searle S."/>
            <person name="Hunt S.E."/>
            <person name="Scott C.E."/>
            <person name="Jones M.C."/>
            <person name="Ainscough R."/>
            <person name="Almeida J.P."/>
            <person name="Ambrose K.D."/>
            <person name="Ashwell R.I.S."/>
            <person name="Babbage A.K."/>
            <person name="Babbage S."/>
            <person name="Bagguley C.L."/>
            <person name="Bailey J."/>
            <person name="Banerjee R."/>
            <person name="Barker D.J."/>
            <person name="Barlow K.F."/>
            <person name="Bates K."/>
            <person name="Beasley H."/>
            <person name="Beasley O."/>
            <person name="Bird C.P."/>
            <person name="Bray-Allen S."/>
            <person name="Brown A.J."/>
            <person name="Brown J.Y."/>
            <person name="Burford D."/>
            <person name="Burrill W."/>
            <person name="Burton J."/>
            <person name="Carder C."/>
            <person name="Carter N.P."/>
            <person name="Chapman J.C."/>
            <person name="Chen Y."/>
            <person name="Clarke G."/>
            <person name="Clark S.Y."/>
            <person name="Clee C.M."/>
            <person name="Clegg S."/>
            <person name="Collier R.E."/>
            <person name="Corby N."/>
            <person name="Crosier M."/>
            <person name="Cummings A.T."/>
            <person name="Davies J."/>
            <person name="Dhami P."/>
            <person name="Dunn M."/>
            <person name="Dutta I."/>
            <person name="Dyer L.W."/>
            <person name="Earthrowl M.E."/>
            <person name="Faulkner L."/>
            <person name="Fleming C.J."/>
            <person name="Frankish A."/>
            <person name="Frankland J.A."/>
            <person name="French L."/>
            <person name="Fricker D.G."/>
            <person name="Garner P."/>
            <person name="Garnett J."/>
            <person name="Ghori J."/>
            <person name="Gilbert J.G.R."/>
            <person name="Glison C."/>
            <person name="Grafham D.V."/>
            <person name="Gribble S."/>
            <person name="Griffiths C."/>
            <person name="Griffiths-Jones S."/>
            <person name="Grocock R."/>
            <person name="Guy J."/>
            <person name="Hall R.E."/>
            <person name="Hammond S."/>
            <person name="Harley J.L."/>
            <person name="Harrison E.S.I."/>
            <person name="Hart E.A."/>
            <person name="Heath P.D."/>
            <person name="Henderson C.D."/>
            <person name="Hopkins B.L."/>
            <person name="Howard P.J."/>
            <person name="Howden P.J."/>
            <person name="Huckle E."/>
            <person name="Johnson C."/>
            <person name="Johnson D."/>
            <person name="Joy A.A."/>
            <person name="Kay M."/>
            <person name="Keenan S."/>
            <person name="Kershaw J.K."/>
            <person name="Kimberley A.M."/>
            <person name="King A."/>
            <person name="Knights A."/>
            <person name="Laird G.K."/>
            <person name="Langford C."/>
            <person name="Lawlor S."/>
            <person name="Leongamornlert D.A."/>
            <person name="Leversha M."/>
            <person name="Lloyd C."/>
            <person name="Lloyd D.M."/>
            <person name="Lovell J."/>
            <person name="Martin S."/>
            <person name="Mashreghi-Mohammadi M."/>
            <person name="Matthews L."/>
            <person name="McLaren S."/>
            <person name="McLay K.E."/>
            <person name="McMurray A."/>
            <person name="Milne S."/>
            <person name="Nickerson T."/>
            <person name="Nisbett J."/>
            <person name="Nordsiek G."/>
            <person name="Pearce A.V."/>
            <person name="Peck A.I."/>
            <person name="Porter K.M."/>
            <person name="Pandian R."/>
            <person name="Pelan S."/>
            <person name="Phillimore B."/>
            <person name="Povey S."/>
            <person name="Ramsey Y."/>
            <person name="Rand V."/>
            <person name="Scharfe M."/>
            <person name="Sehra H.K."/>
            <person name="Shownkeen R."/>
            <person name="Sims S.K."/>
            <person name="Skuce C.D."/>
            <person name="Smith M."/>
            <person name="Steward C.A."/>
            <person name="Swarbreck D."/>
            <person name="Sycamore N."/>
            <person name="Tester J."/>
            <person name="Thorpe A."/>
            <person name="Tracey A."/>
            <person name="Tromans A."/>
            <person name="Thomas D.W."/>
            <person name="Wall M."/>
            <person name="Wallis J.M."/>
            <person name="West A.P."/>
            <person name="Whitehead S.L."/>
            <person name="Willey D.L."/>
            <person name="Williams S.A."/>
            <person name="Wilming L."/>
            <person name="Wray P.W."/>
            <person name="Young L."/>
            <person name="Ashurst J.L."/>
            <person name="Coulson A."/>
            <person name="Blocker H."/>
            <person name="Durbin R.M."/>
            <person name="Sulston J.E."/>
            <person name="Hubbard T."/>
            <person name="Jackson M.J."/>
            <person name="Bentley D.R."/>
            <person name="Beck S."/>
            <person name="Rogers J."/>
            <person name="Dunham I."/>
        </authorList>
    </citation>
    <scope>NUCLEOTIDE SEQUENCE [LARGE SCALE GENOMIC DNA]</scope>
</reference>
<name>YI029_HUMAN</name>
<feature type="chain" id="PRO_0000342662" description="Putative uncharacterized protein LOC401522">
    <location>
        <begin position="1"/>
        <end position="79"/>
    </location>
</feature>
<feature type="region of interest" description="Disordered" evidence="1">
    <location>
        <begin position="51"/>
        <end position="79"/>
    </location>
</feature>
<feature type="compositionally biased region" description="Polar residues" evidence="1">
    <location>
        <begin position="67"/>
        <end position="79"/>
    </location>
</feature>
<proteinExistence type="predicted"/>
<protein>
    <recommendedName>
        <fullName>Putative uncharacterized protein LOC401522</fullName>
    </recommendedName>
</protein>
<keyword id="KW-1185">Reference proteome</keyword>
<organism>
    <name type="scientific">Homo sapiens</name>
    <name type="common">Human</name>
    <dbReference type="NCBI Taxonomy" id="9606"/>
    <lineage>
        <taxon>Eukaryota</taxon>
        <taxon>Metazoa</taxon>
        <taxon>Chordata</taxon>
        <taxon>Craniata</taxon>
        <taxon>Vertebrata</taxon>
        <taxon>Euteleostomi</taxon>
        <taxon>Mammalia</taxon>
        <taxon>Eutheria</taxon>
        <taxon>Euarchontoglires</taxon>
        <taxon>Primates</taxon>
        <taxon>Haplorrhini</taxon>
        <taxon>Catarrhini</taxon>
        <taxon>Hominidae</taxon>
        <taxon>Homo</taxon>
    </lineage>
</organism>
<accession>Q5VSD8</accession>
<dbReference type="EMBL" id="AL935212">
    <property type="status" value="NOT_ANNOTATED_CDS"/>
    <property type="molecule type" value="Genomic_DNA"/>
</dbReference>
<dbReference type="GlyGen" id="Q5VSD8">
    <property type="glycosylation" value="1 site"/>
</dbReference>
<dbReference type="BioMuta" id="-"/>
<dbReference type="neXtProt" id="NX_Q5VSD8"/>
<dbReference type="InParanoid" id="Q5VSD8"/>
<dbReference type="PAN-GO" id="Q5VSD8">
    <property type="GO annotations" value="0 GO annotations based on evolutionary models"/>
</dbReference>
<dbReference type="PhylomeDB" id="Q5VSD8"/>
<dbReference type="Pharos" id="Q5VSD8">
    <property type="development level" value="Tdark"/>
</dbReference>
<dbReference type="Proteomes" id="UP000005640">
    <property type="component" value="Unplaced"/>
</dbReference>
<dbReference type="RNAct" id="Q5VSD8">
    <property type="molecule type" value="protein"/>
</dbReference>